<gene>
    <name evidence="6" type="primary">STMP3</name>
    <name evidence="8" type="ordered locus">At1g65484</name>
    <name evidence="9" type="ORF">F5I14</name>
</gene>
<dbReference type="EMBL" id="AC001229">
    <property type="status" value="NOT_ANNOTATED_CDS"/>
    <property type="molecule type" value="Genomic_DNA"/>
</dbReference>
<dbReference type="EMBL" id="CP002684">
    <property type="protein sequence ID" value="AEE34385.1"/>
    <property type="molecule type" value="Genomic_DNA"/>
</dbReference>
<dbReference type="RefSeq" id="NP_001117550.1">
    <property type="nucleotide sequence ID" value="NM_001124078.2"/>
</dbReference>
<dbReference type="SMR" id="B3H4Y2"/>
<dbReference type="PaxDb" id="3702-AT1G65484.1"/>
<dbReference type="PRIDE" id="B3H4Y2"/>
<dbReference type="EnsemblPlants" id="AT1G65484.1">
    <property type="protein sequence ID" value="AT1G65484.1"/>
    <property type="gene ID" value="AT1G65484"/>
</dbReference>
<dbReference type="GeneID" id="6240315"/>
<dbReference type="Gramene" id="AT1G65484.1">
    <property type="protein sequence ID" value="AT1G65484.1"/>
    <property type="gene ID" value="AT1G65484"/>
</dbReference>
<dbReference type="KEGG" id="ath:AT1G65484"/>
<dbReference type="Araport" id="AT1G65484"/>
<dbReference type="TAIR" id="AT1G65484">
    <property type="gene designation" value="STMP3"/>
</dbReference>
<dbReference type="HOGENOM" id="CLU_2609331_0_0_1"/>
<dbReference type="InParanoid" id="B3H4Y2"/>
<dbReference type="PRO" id="PR:B3H4Y2"/>
<dbReference type="Proteomes" id="UP000006548">
    <property type="component" value="Chromosome 1"/>
</dbReference>
<dbReference type="ExpressionAtlas" id="B3H4Y2">
    <property type="expression patterns" value="baseline and differential"/>
</dbReference>
<dbReference type="GO" id="GO:0048046">
    <property type="term" value="C:apoplast"/>
    <property type="evidence" value="ECO:0000314"/>
    <property type="project" value="UniProtKB"/>
</dbReference>
<dbReference type="GO" id="GO:0005783">
    <property type="term" value="C:endoplasmic reticulum"/>
    <property type="evidence" value="ECO:0000314"/>
    <property type="project" value="TAIR"/>
</dbReference>
<dbReference type="GO" id="GO:0005794">
    <property type="term" value="C:Golgi apparatus"/>
    <property type="evidence" value="ECO:0000314"/>
    <property type="project" value="TAIR"/>
</dbReference>
<dbReference type="GO" id="GO:0097038">
    <property type="term" value="C:perinuclear endoplasmic reticulum"/>
    <property type="evidence" value="ECO:0000314"/>
    <property type="project" value="TAIR"/>
</dbReference>
<dbReference type="GO" id="GO:0005886">
    <property type="term" value="C:plasma membrane"/>
    <property type="evidence" value="ECO:0000314"/>
    <property type="project" value="TAIR"/>
</dbReference>
<dbReference type="GO" id="GO:0099503">
    <property type="term" value="C:secretory vesicle"/>
    <property type="evidence" value="ECO:0000314"/>
    <property type="project" value="TAIR"/>
</dbReference>
<dbReference type="GO" id="GO:0030275">
    <property type="term" value="F:LRR domain binding"/>
    <property type="evidence" value="ECO:0000250"/>
    <property type="project" value="UniProtKB"/>
</dbReference>
<dbReference type="GO" id="GO:0033612">
    <property type="term" value="F:receptor serine/threonine kinase binding"/>
    <property type="evidence" value="ECO:0000250"/>
    <property type="project" value="UniProtKB"/>
</dbReference>
<dbReference type="GO" id="GO:0009723">
    <property type="term" value="P:response to ethylene"/>
    <property type="evidence" value="ECO:0000270"/>
    <property type="project" value="UniProtKB"/>
</dbReference>
<dbReference type="GO" id="GO:0009751">
    <property type="term" value="P:response to salicylic acid"/>
    <property type="evidence" value="ECO:0000270"/>
    <property type="project" value="UniProtKB"/>
</dbReference>
<dbReference type="GO" id="GO:0009651">
    <property type="term" value="P:response to salt stress"/>
    <property type="evidence" value="ECO:0000270"/>
    <property type="project" value="UniProtKB"/>
</dbReference>
<dbReference type="GO" id="GO:0009414">
    <property type="term" value="P:response to water deprivation"/>
    <property type="evidence" value="ECO:0000270"/>
    <property type="project" value="UniProtKB"/>
</dbReference>
<comment type="function">
    <text evidence="2">Brassicaceae-specific phytocytokine (plant endogenous peptide released into the apoplast) perceived by MIK2 in a BAK1/SERK3 and SERK4 coreceptors-dependent manner, that modulates various physiological and antimicrobial processes including growth prevention and reactive oxygen species (ROS) response regulation.</text>
</comment>
<comment type="subunit">
    <text evidence="2">Interacts with MIK2 (via extracellular leucine-rich repeat domain); this interaction triggers the formation of complex between MIK2 and the BAK1/SERK3 and SERK4 coreceptors, and subsequent BAK1 activation by phosphorylation.</text>
</comment>
<comment type="subcellular location">
    <subcellularLocation>
        <location evidence="5">Cell membrane</location>
    </subcellularLocation>
    <subcellularLocation>
        <location evidence="5">Secreted</location>
        <location evidence="5">Extracellular space</location>
        <location evidence="5">Apoplast</location>
    </subcellularLocation>
    <subcellularLocation>
        <location evidence="5">Endoplasmic reticulum</location>
    </subcellularLocation>
    <subcellularLocation>
        <location evidence="5">Golgi apparatus</location>
    </subcellularLocation>
    <text evidence="5">Observed in a reticular pattern and a perinuclear ring (PubMed:31001913). The precursor of STMP3 accumulates at the plasma membrane and is proteolytically cleaved to release the STMP3 in the apoplasm (PubMed:31001913).</text>
</comment>
<comment type="tissue specificity">
    <text evidence="5">Mostly expressed in leaves, and, to a lower extent, in roots, stems, siliques, seeds and flowers.</text>
</comment>
<comment type="induction">
    <text evidence="5">Induced by drought, salt stress, ethylene (ET) and salicylic acid (SA), mainly in shoots.</text>
</comment>
<comment type="similarity">
    <text evidence="7">Belongs to the serine rich endogenous peptide (SCOOP) phytocytokine family.</text>
</comment>
<accession>B3H4Y2</accession>
<sequence length="80" mass="8663">MGLKMSSNALLLSLFLLLLCLFSEIGGSETTHWKIVEEPVRGQIATPPSLTCGGQRLGGPQPRLSPCPRPRPRPRPRTGS</sequence>
<organism>
    <name type="scientific">Arabidopsis thaliana</name>
    <name type="common">Mouse-ear cress</name>
    <dbReference type="NCBI Taxonomy" id="3702"/>
    <lineage>
        <taxon>Eukaryota</taxon>
        <taxon>Viridiplantae</taxon>
        <taxon>Streptophyta</taxon>
        <taxon>Embryophyta</taxon>
        <taxon>Tracheophyta</taxon>
        <taxon>Spermatophyta</taxon>
        <taxon>Magnoliopsida</taxon>
        <taxon>eudicotyledons</taxon>
        <taxon>Gunneridae</taxon>
        <taxon>Pentapetalae</taxon>
        <taxon>rosids</taxon>
        <taxon>malvids</taxon>
        <taxon>Brassicales</taxon>
        <taxon>Brassicaceae</taxon>
        <taxon>Camelineae</taxon>
        <taxon>Arabidopsis</taxon>
    </lineage>
</organism>
<reference key="1">
    <citation type="journal article" date="2000" name="Nature">
        <title>Sequence and analysis of chromosome 1 of the plant Arabidopsis thaliana.</title>
        <authorList>
            <person name="Theologis A."/>
            <person name="Ecker J.R."/>
            <person name="Palm C.J."/>
            <person name="Federspiel N.A."/>
            <person name="Kaul S."/>
            <person name="White O."/>
            <person name="Alonso J."/>
            <person name="Altafi H."/>
            <person name="Araujo R."/>
            <person name="Bowman C.L."/>
            <person name="Brooks S.Y."/>
            <person name="Buehler E."/>
            <person name="Chan A."/>
            <person name="Chao Q."/>
            <person name="Chen H."/>
            <person name="Cheuk R.F."/>
            <person name="Chin C.W."/>
            <person name="Chung M.K."/>
            <person name="Conn L."/>
            <person name="Conway A.B."/>
            <person name="Conway A.R."/>
            <person name="Creasy T.H."/>
            <person name="Dewar K."/>
            <person name="Dunn P."/>
            <person name="Etgu P."/>
            <person name="Feldblyum T.V."/>
            <person name="Feng J.-D."/>
            <person name="Fong B."/>
            <person name="Fujii C.Y."/>
            <person name="Gill J.E."/>
            <person name="Goldsmith A.D."/>
            <person name="Haas B."/>
            <person name="Hansen N.F."/>
            <person name="Hughes B."/>
            <person name="Huizar L."/>
            <person name="Hunter J.L."/>
            <person name="Jenkins J."/>
            <person name="Johnson-Hopson C."/>
            <person name="Khan S."/>
            <person name="Khaykin E."/>
            <person name="Kim C.J."/>
            <person name="Koo H.L."/>
            <person name="Kremenetskaia I."/>
            <person name="Kurtz D.B."/>
            <person name="Kwan A."/>
            <person name="Lam B."/>
            <person name="Langin-Hooper S."/>
            <person name="Lee A."/>
            <person name="Lee J.M."/>
            <person name="Lenz C.A."/>
            <person name="Li J.H."/>
            <person name="Li Y.-P."/>
            <person name="Lin X."/>
            <person name="Liu S.X."/>
            <person name="Liu Z.A."/>
            <person name="Luros J.S."/>
            <person name="Maiti R."/>
            <person name="Marziali A."/>
            <person name="Militscher J."/>
            <person name="Miranda M."/>
            <person name="Nguyen M."/>
            <person name="Nierman W.C."/>
            <person name="Osborne B.I."/>
            <person name="Pai G."/>
            <person name="Peterson J."/>
            <person name="Pham P.K."/>
            <person name="Rizzo M."/>
            <person name="Rooney T."/>
            <person name="Rowley D."/>
            <person name="Sakano H."/>
            <person name="Salzberg S.L."/>
            <person name="Schwartz J.R."/>
            <person name="Shinn P."/>
            <person name="Southwick A.M."/>
            <person name="Sun H."/>
            <person name="Tallon L.J."/>
            <person name="Tambunga G."/>
            <person name="Toriumi M.J."/>
            <person name="Town C.D."/>
            <person name="Utterback T."/>
            <person name="Van Aken S."/>
            <person name="Vaysberg M."/>
            <person name="Vysotskaia V.S."/>
            <person name="Walker M."/>
            <person name="Wu D."/>
            <person name="Yu G."/>
            <person name="Fraser C.M."/>
            <person name="Venter J.C."/>
            <person name="Davis R.W."/>
        </authorList>
    </citation>
    <scope>NUCLEOTIDE SEQUENCE [LARGE SCALE GENOMIC DNA]</scope>
    <source>
        <strain>cv. Columbia</strain>
    </source>
</reference>
<reference key="2">
    <citation type="journal article" date="2017" name="Plant J.">
        <title>Araport11: a complete reannotation of the Arabidopsis thaliana reference genome.</title>
        <authorList>
            <person name="Cheng C.Y."/>
            <person name="Krishnakumar V."/>
            <person name="Chan A.P."/>
            <person name="Thibaud-Nissen F."/>
            <person name="Schobel S."/>
            <person name="Town C.D."/>
        </authorList>
    </citation>
    <scope>GENOME REANNOTATION</scope>
    <source>
        <strain>cv. Columbia</strain>
    </source>
</reference>
<reference key="3">
    <citation type="journal article" date="2020" name="J. Integr. Plant Biol.">
        <title>The Brassicaceae-specific secreted peptides, STMPs, function in plant growth and pathogen defense.</title>
        <authorList>
            <person name="Yu Z."/>
            <person name="Xu Y."/>
            <person name="Zhu L."/>
            <person name="Zhang L."/>
            <person name="Liu L."/>
            <person name="Zhang D."/>
            <person name="Li D."/>
            <person name="Wu C."/>
            <person name="Huang J."/>
            <person name="Yang G."/>
            <person name="Yan K."/>
            <person name="Zhang S."/>
            <person name="Zheng C."/>
        </authorList>
    </citation>
    <scope>SUBCELLULAR LOCATION</scope>
    <scope>TISSUE SPECIFICITY</scope>
    <scope>INDUCTION BY BIOTIC AND ABIOTIC STRESSES</scope>
    <scope>GENE FAMILY</scope>
    <scope>NOMENCLATURE</scope>
    <source>
        <strain>cv. Columbia</strain>
    </source>
</reference>
<proteinExistence type="evidence at transcript level"/>
<name>STMP3_ARATH</name>
<protein>
    <recommendedName>
        <fullName evidence="6">Secreted transmembrane peptide 3</fullName>
    </recommendedName>
    <alternativeName>
        <fullName evidence="7">Phytocytokine STMP3</fullName>
    </alternativeName>
    <alternativeName>
        <fullName evidence="7">Precursor of secreted transmembrane peptide 3</fullName>
    </alternativeName>
</protein>
<feature type="signal peptide" evidence="3">
    <location>
        <begin position="1"/>
        <end position="27"/>
    </location>
</feature>
<feature type="propeptide" id="PRO_0000457260" description="Removed in mature form" evidence="2">
    <location>
        <begin position="28"/>
        <end status="unknown"/>
    </location>
</feature>
<feature type="peptide" id="PRO_0000457261" description="Secreted transmembrane peptide 3" evidence="2">
    <location>
        <begin status="unknown"/>
        <end position="80"/>
    </location>
</feature>
<feature type="region of interest" description="Disordered" evidence="4">
    <location>
        <begin position="44"/>
        <end position="80"/>
    </location>
</feature>
<feature type="short sequence motif" description="SCOOP motif" evidence="1">
    <location>
        <begin position="62"/>
        <end position="80"/>
    </location>
</feature>
<feature type="compositionally biased region" description="Basic residues" evidence="4">
    <location>
        <begin position="70"/>
        <end position="80"/>
    </location>
</feature>
<evidence type="ECO:0000250" key="1">
    <source>
        <dbReference type="UniProtKB" id="A0A1P8AQ95"/>
    </source>
</evidence>
<evidence type="ECO:0000250" key="2">
    <source>
        <dbReference type="UniProtKB" id="B3H7I1"/>
    </source>
</evidence>
<evidence type="ECO:0000255" key="3"/>
<evidence type="ECO:0000256" key="4">
    <source>
        <dbReference type="SAM" id="MobiDB-lite"/>
    </source>
</evidence>
<evidence type="ECO:0000269" key="5">
    <source>
    </source>
</evidence>
<evidence type="ECO:0000303" key="6">
    <source>
    </source>
</evidence>
<evidence type="ECO:0000305" key="7"/>
<evidence type="ECO:0000312" key="8">
    <source>
        <dbReference type="Araport" id="AT1G65484"/>
    </source>
</evidence>
<evidence type="ECO:0000312" key="9">
    <source>
        <dbReference type="EMBL" id="AC001229"/>
    </source>
</evidence>
<keyword id="KW-0052">Apoplast</keyword>
<keyword id="KW-1003">Cell membrane</keyword>
<keyword id="KW-0165">Cleavage on pair of basic residues</keyword>
<keyword id="KW-0256">Endoplasmic reticulum</keyword>
<keyword id="KW-0333">Golgi apparatus</keyword>
<keyword id="KW-0472">Membrane</keyword>
<keyword id="KW-1185">Reference proteome</keyword>
<keyword id="KW-0964">Secreted</keyword>
<keyword id="KW-0732">Signal</keyword>